<keyword id="KW-0004">4Fe-4S</keyword>
<keyword id="KW-0408">Iron</keyword>
<keyword id="KW-0411">Iron-sulfur</keyword>
<keyword id="KW-0479">Metal-binding</keyword>
<keyword id="KW-1185">Reference proteome</keyword>
<dbReference type="EMBL" id="CP000783">
    <property type="protein sequence ID" value="ABU79503.1"/>
    <property type="molecule type" value="Genomic_DNA"/>
</dbReference>
<dbReference type="RefSeq" id="WP_004386390.1">
    <property type="nucleotide sequence ID" value="NC_009778.1"/>
</dbReference>
<dbReference type="SMR" id="A7ME80"/>
<dbReference type="GeneID" id="56732925"/>
<dbReference type="KEGG" id="esa:ESA_04324"/>
<dbReference type="HOGENOM" id="CLU_094569_0_0_6"/>
<dbReference type="Proteomes" id="UP000000260">
    <property type="component" value="Chromosome"/>
</dbReference>
<dbReference type="GO" id="GO:0051539">
    <property type="term" value="F:4 iron, 4 sulfur cluster binding"/>
    <property type="evidence" value="ECO:0007669"/>
    <property type="project" value="UniProtKB-UniRule"/>
</dbReference>
<dbReference type="GO" id="GO:0005506">
    <property type="term" value="F:iron ion binding"/>
    <property type="evidence" value="ECO:0007669"/>
    <property type="project" value="InterPro"/>
</dbReference>
<dbReference type="GO" id="GO:0016226">
    <property type="term" value="P:iron-sulfur cluster assembly"/>
    <property type="evidence" value="ECO:0007669"/>
    <property type="project" value="UniProtKB-UniRule"/>
</dbReference>
<dbReference type="GO" id="GO:0051604">
    <property type="term" value="P:protein maturation"/>
    <property type="evidence" value="ECO:0007669"/>
    <property type="project" value="UniProtKB-UniRule"/>
</dbReference>
<dbReference type="FunFam" id="2.60.300.12:FF:000004">
    <property type="entry name" value="Fe/S biogenesis protein NfuA"/>
    <property type="match status" value="1"/>
</dbReference>
<dbReference type="FunFam" id="3.30.300.130:FF:000002">
    <property type="entry name" value="Fe/S biogenesis protein NfuA"/>
    <property type="match status" value="1"/>
</dbReference>
<dbReference type="Gene3D" id="3.30.300.130">
    <property type="entry name" value="Fe-S cluster assembly (FSCA)"/>
    <property type="match status" value="1"/>
</dbReference>
<dbReference type="Gene3D" id="2.60.300.12">
    <property type="entry name" value="HesB-like domain"/>
    <property type="match status" value="1"/>
</dbReference>
<dbReference type="HAMAP" id="MF_01637">
    <property type="entry name" value="Fe_S_biogen_NfuA"/>
    <property type="match status" value="1"/>
</dbReference>
<dbReference type="InterPro" id="IPR017726">
    <property type="entry name" value="Fe/S_biogenesis_protein_NfuA"/>
</dbReference>
<dbReference type="InterPro" id="IPR000361">
    <property type="entry name" value="FeS_biogenesis"/>
</dbReference>
<dbReference type="InterPro" id="IPR034904">
    <property type="entry name" value="FSCA_dom_sf"/>
</dbReference>
<dbReference type="InterPro" id="IPR035903">
    <property type="entry name" value="HesB-like_dom_sf"/>
</dbReference>
<dbReference type="InterPro" id="IPR001075">
    <property type="entry name" value="NIF_FeS_clus_asmbl_NifU_C"/>
</dbReference>
<dbReference type="NCBIfam" id="NF008392">
    <property type="entry name" value="PRK11190.1"/>
    <property type="match status" value="1"/>
</dbReference>
<dbReference type="NCBIfam" id="TIGR03341">
    <property type="entry name" value="YhgI_GntY"/>
    <property type="match status" value="1"/>
</dbReference>
<dbReference type="PANTHER" id="PTHR11178:SF51">
    <property type="entry name" value="FE_S BIOGENESIS PROTEIN NFUA"/>
    <property type="match status" value="1"/>
</dbReference>
<dbReference type="PANTHER" id="PTHR11178">
    <property type="entry name" value="IRON-SULFUR CLUSTER SCAFFOLD PROTEIN NFU-RELATED"/>
    <property type="match status" value="1"/>
</dbReference>
<dbReference type="Pfam" id="PF01521">
    <property type="entry name" value="Fe-S_biosyn"/>
    <property type="match status" value="1"/>
</dbReference>
<dbReference type="Pfam" id="PF01106">
    <property type="entry name" value="NifU"/>
    <property type="match status" value="1"/>
</dbReference>
<dbReference type="SUPFAM" id="SSF117916">
    <property type="entry name" value="Fe-S cluster assembly (FSCA) domain-like"/>
    <property type="match status" value="1"/>
</dbReference>
<dbReference type="SUPFAM" id="SSF89360">
    <property type="entry name" value="HesB-like domain"/>
    <property type="match status" value="1"/>
</dbReference>
<reference key="1">
    <citation type="journal article" date="2010" name="PLoS ONE">
        <title>Genome sequence of Cronobacter sakazakii BAA-894 and comparative genomic hybridization analysis with other Cronobacter species.</title>
        <authorList>
            <person name="Kucerova E."/>
            <person name="Clifton S.W."/>
            <person name="Xia X.Q."/>
            <person name="Long F."/>
            <person name="Porwollik S."/>
            <person name="Fulton L."/>
            <person name="Fronick C."/>
            <person name="Minx P."/>
            <person name="Kyung K."/>
            <person name="Warren W."/>
            <person name="Fulton R."/>
            <person name="Feng D."/>
            <person name="Wollam A."/>
            <person name="Shah N."/>
            <person name="Bhonagiri V."/>
            <person name="Nash W.E."/>
            <person name="Hallsworth-Pepin K."/>
            <person name="Wilson R.K."/>
            <person name="McClelland M."/>
            <person name="Forsythe S.J."/>
        </authorList>
    </citation>
    <scope>NUCLEOTIDE SEQUENCE [LARGE SCALE GENOMIC DNA]</scope>
    <source>
        <strain>ATCC BAA-894</strain>
    </source>
</reference>
<name>NFUA_CROS8</name>
<proteinExistence type="inferred from homology"/>
<comment type="function">
    <text evidence="1">Involved in iron-sulfur cluster biogenesis. Binds a 4Fe-4S cluster, can transfer this cluster to apoproteins, and thereby intervenes in the maturation of Fe/S proteins. Could also act as a scaffold/chaperone for damaged Fe/S proteins.</text>
</comment>
<comment type="cofactor">
    <cofactor evidence="1">
        <name>[4Fe-4S] cluster</name>
        <dbReference type="ChEBI" id="CHEBI:49883"/>
    </cofactor>
    <text evidence="1">Binds 1 [4Fe-4S] cluster per subunit. The cluster is presumably bound at the interface of two monomers.</text>
</comment>
<comment type="subunit">
    <text evidence="1">Homodimer.</text>
</comment>
<comment type="similarity">
    <text evidence="1">Belongs to the NfuA family.</text>
</comment>
<evidence type="ECO:0000255" key="1">
    <source>
        <dbReference type="HAMAP-Rule" id="MF_01637"/>
    </source>
</evidence>
<sequence>MIRISDAAQAHFAKLLASQEEGTQIRVFVINPGTPNAECGVSYCPPDAVEATDTALKFDLLTAYVDELSAPYLEDAEIDFVTDQLGSQLTLKAPNAKMRKVADDAPLMERVEYMLQSQINPQLAGHGGRVTLMEITDEGYAILQFGGGCNGCSMVDVTLKEGIEKQLLNEFPELKGVRDLTEHQRGEHSYY</sequence>
<protein>
    <recommendedName>
        <fullName evidence="1">Fe/S biogenesis protein NfuA</fullName>
    </recommendedName>
</protein>
<accession>A7ME80</accession>
<feature type="chain" id="PRO_1000069870" description="Fe/S biogenesis protein NfuA">
    <location>
        <begin position="1"/>
        <end position="191"/>
    </location>
</feature>
<feature type="binding site" evidence="1">
    <location>
        <position position="149"/>
    </location>
    <ligand>
        <name>[4Fe-4S] cluster</name>
        <dbReference type="ChEBI" id="CHEBI:49883"/>
    </ligand>
</feature>
<feature type="binding site" evidence="1">
    <location>
        <position position="152"/>
    </location>
    <ligand>
        <name>[4Fe-4S] cluster</name>
        <dbReference type="ChEBI" id="CHEBI:49883"/>
    </ligand>
</feature>
<organism>
    <name type="scientific">Cronobacter sakazakii (strain ATCC BAA-894)</name>
    <name type="common">Enterobacter sakazakii</name>
    <dbReference type="NCBI Taxonomy" id="290339"/>
    <lineage>
        <taxon>Bacteria</taxon>
        <taxon>Pseudomonadati</taxon>
        <taxon>Pseudomonadota</taxon>
        <taxon>Gammaproteobacteria</taxon>
        <taxon>Enterobacterales</taxon>
        <taxon>Enterobacteriaceae</taxon>
        <taxon>Cronobacter</taxon>
    </lineage>
</organism>
<gene>
    <name evidence="1" type="primary">nfuA</name>
    <name type="ordered locus">ESA_04324</name>
</gene>